<keyword id="KW-0238">DNA-binding</keyword>
<keyword id="KW-1185">Reference proteome</keyword>
<keyword id="KW-0678">Repressor</keyword>
<keyword id="KW-0804">Transcription</keyword>
<keyword id="KW-0805">Transcription regulation</keyword>
<feature type="chain" id="PRO_0000305337" description="Biofilm growth-associated repressor">
    <location>
        <begin position="1"/>
        <end position="114"/>
    </location>
</feature>
<feature type="domain" description="HTH arsR-type" evidence="2">
    <location>
        <begin position="17"/>
        <end position="111"/>
    </location>
</feature>
<feature type="DNA-binding region" description="H-T-H motif" evidence="2">
    <location>
        <begin position="51"/>
        <end position="74"/>
    </location>
</feature>
<comment type="function">
    <text evidence="1">Represses an operon that probably comprises itself, PD_1892, PD_1893, PD_1894 and blh. Binds to a palindromic AT-rich sequence spanning the -10 region of the blh promoter and blocks transcription of the operon (By similarity).</text>
</comment>
<proteinExistence type="inferred from homology"/>
<name>BIGR_XYLFT</name>
<reference key="1">
    <citation type="journal article" date="2003" name="J. Bacteriol.">
        <title>Comparative analyses of the complete genome sequences of Pierce's disease and citrus variegated chlorosis strains of Xylella fastidiosa.</title>
        <authorList>
            <person name="Van Sluys M.A."/>
            <person name="de Oliveira M.C."/>
            <person name="Monteiro-Vitorello C.B."/>
            <person name="Miyaki C.Y."/>
            <person name="Furlan L.R."/>
            <person name="Camargo L.E.A."/>
            <person name="da Silva A.C.R."/>
            <person name="Moon D.H."/>
            <person name="Takita M.A."/>
            <person name="Lemos E.G.M."/>
            <person name="Machado M.A."/>
            <person name="Ferro M.I.T."/>
            <person name="da Silva F.R."/>
            <person name="Goldman M.H.S."/>
            <person name="Goldman G.H."/>
            <person name="Lemos M.V.F."/>
            <person name="El-Dorry H."/>
            <person name="Tsai S.M."/>
            <person name="Carrer H."/>
            <person name="Carraro D.M."/>
            <person name="de Oliveira R.C."/>
            <person name="Nunes L.R."/>
            <person name="Siqueira W.J."/>
            <person name="Coutinho L.L."/>
            <person name="Kimura E.T."/>
            <person name="Ferro E.S."/>
            <person name="Harakava R."/>
            <person name="Kuramae E.E."/>
            <person name="Marino C.L."/>
            <person name="Giglioti E."/>
            <person name="Abreu I.L."/>
            <person name="Alves L.M.C."/>
            <person name="do Amaral A.M."/>
            <person name="Baia G.S."/>
            <person name="Blanco S.R."/>
            <person name="Brito M.S."/>
            <person name="Cannavan F.S."/>
            <person name="Celestino A.V."/>
            <person name="da Cunha A.F."/>
            <person name="Fenille R.C."/>
            <person name="Ferro J.A."/>
            <person name="Formighieri E.F."/>
            <person name="Kishi L.T."/>
            <person name="Leoni S.G."/>
            <person name="Oliveira A.R."/>
            <person name="Rosa V.E. Jr."/>
            <person name="Sassaki F.T."/>
            <person name="Sena J.A.D."/>
            <person name="de Souza A.A."/>
            <person name="Truffi D."/>
            <person name="Tsukumo F."/>
            <person name="Yanai G.M."/>
            <person name="Zaros L.G."/>
            <person name="Civerolo E.L."/>
            <person name="Simpson A.J.G."/>
            <person name="Almeida N.F. Jr."/>
            <person name="Setubal J.C."/>
            <person name="Kitajima J.P."/>
        </authorList>
    </citation>
    <scope>NUCLEOTIDE SEQUENCE [LARGE SCALE GENOMIC DNA]</scope>
    <source>
        <strain>Temecula1 / ATCC 700964</strain>
    </source>
</reference>
<evidence type="ECO:0000250" key="1"/>
<evidence type="ECO:0000255" key="2">
    <source>
        <dbReference type="PROSITE-ProRule" id="PRU00340"/>
    </source>
</evidence>
<organism>
    <name type="scientific">Xylella fastidiosa (strain Temecula1 / ATCC 700964)</name>
    <dbReference type="NCBI Taxonomy" id="183190"/>
    <lineage>
        <taxon>Bacteria</taxon>
        <taxon>Pseudomonadati</taxon>
        <taxon>Pseudomonadota</taxon>
        <taxon>Gammaproteobacteria</taxon>
        <taxon>Lysobacterales</taxon>
        <taxon>Lysobacteraceae</taxon>
        <taxon>Xylella</taxon>
    </lineage>
</organism>
<sequence>MVNEMRDNTVPHMTREDMEKRANEVANLLKTLSHPVRLMLVCTLVEGEFSVGELEQQIGIGQPTLSQQLGVLRESGIVETRRNIKQIFYRLTEAKAAQLVNALYTIFCTQEKQA</sequence>
<protein>
    <recommendedName>
        <fullName>Biofilm growth-associated repressor</fullName>
    </recommendedName>
</protein>
<dbReference type="EMBL" id="AE009442">
    <property type="protein sequence ID" value="AAO29722.1"/>
    <property type="molecule type" value="Genomic_DNA"/>
</dbReference>
<dbReference type="RefSeq" id="WP_004090443.1">
    <property type="nucleotide sequence ID" value="NC_004556.1"/>
</dbReference>
<dbReference type="SMR" id="Q87AD5"/>
<dbReference type="GeneID" id="93905750"/>
<dbReference type="KEGG" id="xft:PD_1891"/>
<dbReference type="HOGENOM" id="CLU_097806_6_4_6"/>
<dbReference type="Proteomes" id="UP000002516">
    <property type="component" value="Chromosome"/>
</dbReference>
<dbReference type="GO" id="GO:0003677">
    <property type="term" value="F:DNA binding"/>
    <property type="evidence" value="ECO:0007669"/>
    <property type="project" value="UniProtKB-KW"/>
</dbReference>
<dbReference type="GO" id="GO:0003700">
    <property type="term" value="F:DNA-binding transcription factor activity"/>
    <property type="evidence" value="ECO:0007669"/>
    <property type="project" value="InterPro"/>
</dbReference>
<dbReference type="CDD" id="cd00090">
    <property type="entry name" value="HTH_ARSR"/>
    <property type="match status" value="1"/>
</dbReference>
<dbReference type="Gene3D" id="1.10.10.10">
    <property type="entry name" value="Winged helix-like DNA-binding domain superfamily/Winged helix DNA-binding domain"/>
    <property type="match status" value="1"/>
</dbReference>
<dbReference type="InterPro" id="IPR011991">
    <property type="entry name" value="ArsR-like_HTH"/>
</dbReference>
<dbReference type="InterPro" id="IPR001845">
    <property type="entry name" value="HTH_ArsR_DNA-bd_dom"/>
</dbReference>
<dbReference type="InterPro" id="IPR051011">
    <property type="entry name" value="Metal_resp_trans_reg"/>
</dbReference>
<dbReference type="InterPro" id="IPR036388">
    <property type="entry name" value="WH-like_DNA-bd_sf"/>
</dbReference>
<dbReference type="InterPro" id="IPR036390">
    <property type="entry name" value="WH_DNA-bd_sf"/>
</dbReference>
<dbReference type="NCBIfam" id="NF033788">
    <property type="entry name" value="HTH_metalloreg"/>
    <property type="match status" value="1"/>
</dbReference>
<dbReference type="NCBIfam" id="NF040642">
    <property type="entry name" value="sulf_sens_BigR"/>
    <property type="match status" value="1"/>
</dbReference>
<dbReference type="PANTHER" id="PTHR43132">
    <property type="entry name" value="ARSENICAL RESISTANCE OPERON REPRESSOR ARSR-RELATED"/>
    <property type="match status" value="1"/>
</dbReference>
<dbReference type="PANTHER" id="PTHR43132:SF2">
    <property type="entry name" value="ARSENICAL RESISTANCE OPERON REPRESSOR ARSR-RELATED"/>
    <property type="match status" value="1"/>
</dbReference>
<dbReference type="Pfam" id="PF01022">
    <property type="entry name" value="HTH_5"/>
    <property type="match status" value="1"/>
</dbReference>
<dbReference type="PRINTS" id="PR00778">
    <property type="entry name" value="HTHARSR"/>
</dbReference>
<dbReference type="SMART" id="SM00418">
    <property type="entry name" value="HTH_ARSR"/>
    <property type="match status" value="1"/>
</dbReference>
<dbReference type="SUPFAM" id="SSF46785">
    <property type="entry name" value="Winged helix' DNA-binding domain"/>
    <property type="match status" value="1"/>
</dbReference>
<dbReference type="PROSITE" id="PS50987">
    <property type="entry name" value="HTH_ARSR_2"/>
    <property type="match status" value="1"/>
</dbReference>
<gene>
    <name type="primary">bigR</name>
    <name type="ordered locus">PD_1891</name>
</gene>
<accession>Q87AD5</accession>